<comment type="function">
    <text evidence="1">Protein kinase that seems to play a role in the regulation of cell morphogenesis and proliferation.</text>
</comment>
<comment type="catalytic activity">
    <reaction>
        <text>L-seryl-[protein] + ATP = O-phospho-L-seryl-[protein] + ADP + H(+)</text>
        <dbReference type="Rhea" id="RHEA:17989"/>
        <dbReference type="Rhea" id="RHEA-COMP:9863"/>
        <dbReference type="Rhea" id="RHEA-COMP:11604"/>
        <dbReference type="ChEBI" id="CHEBI:15378"/>
        <dbReference type="ChEBI" id="CHEBI:29999"/>
        <dbReference type="ChEBI" id="CHEBI:30616"/>
        <dbReference type="ChEBI" id="CHEBI:83421"/>
        <dbReference type="ChEBI" id="CHEBI:456216"/>
        <dbReference type="EC" id="2.7.11.1"/>
    </reaction>
</comment>
<comment type="catalytic activity">
    <reaction>
        <text>L-threonyl-[protein] + ATP = O-phospho-L-threonyl-[protein] + ADP + H(+)</text>
        <dbReference type="Rhea" id="RHEA:46608"/>
        <dbReference type="Rhea" id="RHEA-COMP:11060"/>
        <dbReference type="Rhea" id="RHEA-COMP:11605"/>
        <dbReference type="ChEBI" id="CHEBI:15378"/>
        <dbReference type="ChEBI" id="CHEBI:30013"/>
        <dbReference type="ChEBI" id="CHEBI:30616"/>
        <dbReference type="ChEBI" id="CHEBI:61977"/>
        <dbReference type="ChEBI" id="CHEBI:456216"/>
        <dbReference type="EC" id="2.7.11.1"/>
    </reaction>
</comment>
<comment type="similarity">
    <text evidence="6">Belongs to the protein kinase superfamily. STE Ser/Thr protein kinase family. COT1 subfamily.</text>
</comment>
<sequence>MFGGEYDHAYDANNGQRFQPPVLDAMEFEKPGSPSVGDHFLRQQISNQSLHDQYSSHMEQQQQQQQQQHNAAYGAGFTDIPQLHPSTPPHGLVQKISNGNFHPAMNQGGNIPSTSNMNNMFNTPPPTMGNNPLYSHDNNSTNLLQDNLNQARSQFSPDRYSVDSDFNNGAGNHVMANGNYNINGSQSSSPYHQPQTFYTNSNLSSGQLSAHRSSPQRQPAQPLQQTTFTQLPQPSLPPQQQQQQQQQQQQQQQQQPKFQSMVPPQQTQLQQQQQQELQNAGSYMYFERRPDLLSKSTQDKAAAVKLKVENYYQQSVKYAIERNERRVELETELGSHNWSEERNARQLASLGKKESQFLRLRRTRLSLEDFHTVQVIGKGAFGEVRLVQKKDTGKIYAMKTLLKSEMYKKDQLAHVKAERDVLAGTDSPWIVSLYYSFQDAQYLYLIMEFLPGGDLMTMLIRWQLFTEDVTRFYMAECILAIETIHKLGFIHRDIKPDNILIDIRGHIKLSDFGLSTGFHKTHDSNYYKKLLQQDEATTKNGAPNDAGDGSNNRQTMIVDSINLTMSNRQQIQTWRKSRRLMAYSTVGTPDYIAPEIFLYQGYGQDCDWWSLGAIMYECLIGWPPFCSETPQETYRKIMNFEQTLQFPEDVHISYEAEDLIRRLLTHSNQRLGRQGGADEIKSHPFFRGVDWNTIRQVEAPYIPKLSSITDTRFFPTDELENVPDSPAMAQAAKQREQMMKNGVNPNQNQVKEDLPFIGYTYSRFDYLTRKNAL</sequence>
<dbReference type="EC" id="2.7.11.1"/>
<dbReference type="EMBL" id="CR380956">
    <property type="protein sequence ID" value="CAG60921.1"/>
    <property type="molecule type" value="Genomic_DNA"/>
</dbReference>
<dbReference type="RefSeq" id="XP_447970.1">
    <property type="nucleotide sequence ID" value="XM_447970.1"/>
</dbReference>
<dbReference type="SMR" id="Q6FP74"/>
<dbReference type="FunCoup" id="Q6FP74">
    <property type="interactions" value="641"/>
</dbReference>
<dbReference type="STRING" id="284593.Q6FP74"/>
<dbReference type="EnsemblFungi" id="CAGL0J06072g-T">
    <property type="protein sequence ID" value="CAGL0J06072g-T-p1"/>
    <property type="gene ID" value="CAGL0J06072g"/>
</dbReference>
<dbReference type="GeneID" id="2889779"/>
<dbReference type="KEGG" id="cgr:2889779"/>
<dbReference type="CGD" id="CAL0133578">
    <property type="gene designation" value="CBK1"/>
</dbReference>
<dbReference type="VEuPathDB" id="FungiDB:CAGL0J06072g"/>
<dbReference type="eggNOG" id="KOG0605">
    <property type="taxonomic scope" value="Eukaryota"/>
</dbReference>
<dbReference type="HOGENOM" id="CLU_000288_67_2_1"/>
<dbReference type="InParanoid" id="Q6FP74"/>
<dbReference type="OMA" id="KIINWQE"/>
<dbReference type="Proteomes" id="UP000002428">
    <property type="component" value="Chromosome J"/>
</dbReference>
<dbReference type="GO" id="GO:0005938">
    <property type="term" value="C:cell cortex"/>
    <property type="evidence" value="ECO:0007669"/>
    <property type="project" value="EnsemblFungi"/>
</dbReference>
<dbReference type="GO" id="GO:0005935">
    <property type="term" value="C:cellular bud neck"/>
    <property type="evidence" value="ECO:0007669"/>
    <property type="project" value="EnsemblFungi"/>
</dbReference>
<dbReference type="GO" id="GO:0005934">
    <property type="term" value="C:cellular bud tip"/>
    <property type="evidence" value="ECO:0007669"/>
    <property type="project" value="EnsemblFungi"/>
</dbReference>
<dbReference type="GO" id="GO:0000131">
    <property type="term" value="C:incipient cellular bud site"/>
    <property type="evidence" value="ECO:0007669"/>
    <property type="project" value="EnsemblFungi"/>
</dbReference>
<dbReference type="GO" id="GO:0043332">
    <property type="term" value="C:mating projection tip"/>
    <property type="evidence" value="ECO:0007669"/>
    <property type="project" value="EnsemblFungi"/>
</dbReference>
<dbReference type="GO" id="GO:0005634">
    <property type="term" value="C:nucleus"/>
    <property type="evidence" value="ECO:0007669"/>
    <property type="project" value="EnsemblFungi"/>
</dbReference>
<dbReference type="GO" id="GO:1902554">
    <property type="term" value="C:serine/threonine protein kinase complex"/>
    <property type="evidence" value="ECO:0007669"/>
    <property type="project" value="EnsemblFungi"/>
</dbReference>
<dbReference type="GO" id="GO:0005524">
    <property type="term" value="F:ATP binding"/>
    <property type="evidence" value="ECO:0007669"/>
    <property type="project" value="UniProtKB-KW"/>
</dbReference>
<dbReference type="GO" id="GO:0042802">
    <property type="term" value="F:identical protein binding"/>
    <property type="evidence" value="ECO:0007669"/>
    <property type="project" value="EnsemblFungi"/>
</dbReference>
<dbReference type="GO" id="GO:0106310">
    <property type="term" value="F:protein serine kinase activity"/>
    <property type="evidence" value="ECO:0007669"/>
    <property type="project" value="RHEA"/>
</dbReference>
<dbReference type="GO" id="GO:0004674">
    <property type="term" value="F:protein serine/threonine kinase activity"/>
    <property type="evidence" value="ECO:0007669"/>
    <property type="project" value="UniProtKB-KW"/>
</dbReference>
<dbReference type="GO" id="GO:0007118">
    <property type="term" value="P:budding cell apical bud growth"/>
    <property type="evidence" value="ECO:0007669"/>
    <property type="project" value="EnsemblFungi"/>
</dbReference>
<dbReference type="GO" id="GO:0030950">
    <property type="term" value="P:establishment or maintenance of actin cytoskeleton polarity"/>
    <property type="evidence" value="ECO:0007669"/>
    <property type="project" value="EnsemblFungi"/>
</dbReference>
<dbReference type="GO" id="GO:0060237">
    <property type="term" value="P:regulation of fungal-type cell wall organization"/>
    <property type="evidence" value="ECO:0007669"/>
    <property type="project" value="EnsemblFungi"/>
</dbReference>
<dbReference type="GO" id="GO:0050708">
    <property type="term" value="P:regulation of protein secretion"/>
    <property type="evidence" value="ECO:0007669"/>
    <property type="project" value="EnsemblFungi"/>
</dbReference>
<dbReference type="GO" id="GO:0000920">
    <property type="term" value="P:septum digestion after cytokinesis"/>
    <property type="evidence" value="ECO:0007669"/>
    <property type="project" value="EnsemblFungi"/>
</dbReference>
<dbReference type="CDD" id="cd21773">
    <property type="entry name" value="MobB_CBK1"/>
    <property type="match status" value="1"/>
</dbReference>
<dbReference type="CDD" id="cd05629">
    <property type="entry name" value="STKc_NDR_like_fungal"/>
    <property type="match status" value="1"/>
</dbReference>
<dbReference type="FunFam" id="1.10.510.10:FF:000086">
    <property type="entry name" value="Non-specific serine/threonine protein kinase"/>
    <property type="match status" value="1"/>
</dbReference>
<dbReference type="FunFam" id="1.10.510.10:FF:000828">
    <property type="entry name" value="Serine/threonine-protein kinase CBK1"/>
    <property type="match status" value="1"/>
</dbReference>
<dbReference type="FunFam" id="3.30.200.20:FF:000767">
    <property type="entry name" value="Serine/threonine-protein kinase CBK1"/>
    <property type="match status" value="1"/>
</dbReference>
<dbReference type="FunFam" id="3.30.200.20:FF:000192">
    <property type="entry name" value="Serine/threonine-protein kinase cot-1"/>
    <property type="match status" value="1"/>
</dbReference>
<dbReference type="Gene3D" id="3.30.200.20">
    <property type="entry name" value="Phosphorylase Kinase, domain 1"/>
    <property type="match status" value="2"/>
</dbReference>
<dbReference type="Gene3D" id="1.10.510.10">
    <property type="entry name" value="Transferase(Phosphotransferase) domain 1"/>
    <property type="match status" value="2"/>
</dbReference>
<dbReference type="InterPro" id="IPR000961">
    <property type="entry name" value="AGC-kinase_C"/>
</dbReference>
<dbReference type="InterPro" id="IPR011009">
    <property type="entry name" value="Kinase-like_dom_sf"/>
</dbReference>
<dbReference type="InterPro" id="IPR000719">
    <property type="entry name" value="Prot_kinase_dom"/>
</dbReference>
<dbReference type="InterPro" id="IPR017441">
    <property type="entry name" value="Protein_kinase_ATP_BS"/>
</dbReference>
<dbReference type="InterPro" id="IPR050839">
    <property type="entry name" value="Rho-assoc_Ser/Thr_Kinase"/>
</dbReference>
<dbReference type="InterPro" id="IPR008271">
    <property type="entry name" value="Ser/Thr_kinase_AS"/>
</dbReference>
<dbReference type="PANTHER" id="PTHR22988">
    <property type="entry name" value="MYOTONIC DYSTROPHY S/T KINASE-RELATED"/>
    <property type="match status" value="1"/>
</dbReference>
<dbReference type="Pfam" id="PF00069">
    <property type="entry name" value="Pkinase"/>
    <property type="match status" value="2"/>
</dbReference>
<dbReference type="SMART" id="SM00133">
    <property type="entry name" value="S_TK_X"/>
    <property type="match status" value="1"/>
</dbReference>
<dbReference type="SMART" id="SM00220">
    <property type="entry name" value="S_TKc"/>
    <property type="match status" value="1"/>
</dbReference>
<dbReference type="SUPFAM" id="SSF56112">
    <property type="entry name" value="Protein kinase-like (PK-like)"/>
    <property type="match status" value="1"/>
</dbReference>
<dbReference type="PROSITE" id="PS51285">
    <property type="entry name" value="AGC_KINASE_CTER"/>
    <property type="match status" value="1"/>
</dbReference>
<dbReference type="PROSITE" id="PS00107">
    <property type="entry name" value="PROTEIN_KINASE_ATP"/>
    <property type="match status" value="1"/>
</dbReference>
<dbReference type="PROSITE" id="PS50011">
    <property type="entry name" value="PROTEIN_KINASE_DOM"/>
    <property type="match status" value="1"/>
</dbReference>
<dbReference type="PROSITE" id="PS00108">
    <property type="entry name" value="PROTEIN_KINASE_ST"/>
    <property type="match status" value="1"/>
</dbReference>
<name>CBK1_CANGA</name>
<evidence type="ECO:0000250" key="1"/>
<evidence type="ECO:0000255" key="2">
    <source>
        <dbReference type="PROSITE-ProRule" id="PRU00159"/>
    </source>
</evidence>
<evidence type="ECO:0000255" key="3">
    <source>
        <dbReference type="PROSITE-ProRule" id="PRU00618"/>
    </source>
</evidence>
<evidence type="ECO:0000255" key="4">
    <source>
        <dbReference type="PROSITE-ProRule" id="PRU10027"/>
    </source>
</evidence>
<evidence type="ECO:0000256" key="5">
    <source>
        <dbReference type="SAM" id="MobiDB-lite"/>
    </source>
</evidence>
<evidence type="ECO:0000305" key="6"/>
<organism>
    <name type="scientific">Candida glabrata (strain ATCC 2001 / BCRC 20586 / JCM 3761 / NBRC 0622 / NRRL Y-65 / CBS 138)</name>
    <name type="common">Yeast</name>
    <name type="synonym">Nakaseomyces glabratus</name>
    <dbReference type="NCBI Taxonomy" id="284593"/>
    <lineage>
        <taxon>Eukaryota</taxon>
        <taxon>Fungi</taxon>
        <taxon>Dikarya</taxon>
        <taxon>Ascomycota</taxon>
        <taxon>Saccharomycotina</taxon>
        <taxon>Saccharomycetes</taxon>
        <taxon>Saccharomycetales</taxon>
        <taxon>Saccharomycetaceae</taxon>
        <taxon>Nakaseomyces</taxon>
    </lineage>
</organism>
<gene>
    <name type="primary">CBK1</name>
    <name type="ordered locus">CAGL0J06072g</name>
</gene>
<keyword id="KW-0067">ATP-binding</keyword>
<keyword id="KW-0418">Kinase</keyword>
<keyword id="KW-0547">Nucleotide-binding</keyword>
<keyword id="KW-0597">Phosphoprotein</keyword>
<keyword id="KW-1185">Reference proteome</keyword>
<keyword id="KW-0723">Serine/threonine-protein kinase</keyword>
<keyword id="KW-0808">Transferase</keyword>
<accession>Q6FP74</accession>
<reference key="1">
    <citation type="journal article" date="2004" name="Nature">
        <title>Genome evolution in yeasts.</title>
        <authorList>
            <person name="Dujon B."/>
            <person name="Sherman D."/>
            <person name="Fischer G."/>
            <person name="Durrens P."/>
            <person name="Casaregola S."/>
            <person name="Lafontaine I."/>
            <person name="de Montigny J."/>
            <person name="Marck C."/>
            <person name="Neuveglise C."/>
            <person name="Talla E."/>
            <person name="Goffard N."/>
            <person name="Frangeul L."/>
            <person name="Aigle M."/>
            <person name="Anthouard V."/>
            <person name="Babour A."/>
            <person name="Barbe V."/>
            <person name="Barnay S."/>
            <person name="Blanchin S."/>
            <person name="Beckerich J.-M."/>
            <person name="Beyne E."/>
            <person name="Bleykasten C."/>
            <person name="Boisrame A."/>
            <person name="Boyer J."/>
            <person name="Cattolico L."/>
            <person name="Confanioleri F."/>
            <person name="de Daruvar A."/>
            <person name="Despons L."/>
            <person name="Fabre E."/>
            <person name="Fairhead C."/>
            <person name="Ferry-Dumazet H."/>
            <person name="Groppi A."/>
            <person name="Hantraye F."/>
            <person name="Hennequin C."/>
            <person name="Jauniaux N."/>
            <person name="Joyet P."/>
            <person name="Kachouri R."/>
            <person name="Kerrest A."/>
            <person name="Koszul R."/>
            <person name="Lemaire M."/>
            <person name="Lesur I."/>
            <person name="Ma L."/>
            <person name="Muller H."/>
            <person name="Nicaud J.-M."/>
            <person name="Nikolski M."/>
            <person name="Oztas S."/>
            <person name="Ozier-Kalogeropoulos O."/>
            <person name="Pellenz S."/>
            <person name="Potier S."/>
            <person name="Richard G.-F."/>
            <person name="Straub M.-L."/>
            <person name="Suleau A."/>
            <person name="Swennen D."/>
            <person name="Tekaia F."/>
            <person name="Wesolowski-Louvel M."/>
            <person name="Westhof E."/>
            <person name="Wirth B."/>
            <person name="Zeniou-Meyer M."/>
            <person name="Zivanovic Y."/>
            <person name="Bolotin-Fukuhara M."/>
            <person name="Thierry A."/>
            <person name="Bouchier C."/>
            <person name="Caudron B."/>
            <person name="Scarpelli C."/>
            <person name="Gaillardin C."/>
            <person name="Weissenbach J."/>
            <person name="Wincker P."/>
            <person name="Souciet J.-L."/>
        </authorList>
    </citation>
    <scope>NUCLEOTIDE SEQUENCE [LARGE SCALE GENOMIC DNA]</scope>
    <source>
        <strain>ATCC 2001 / BCRC 20586 / JCM 3761 / NBRC 0622 / NRRL Y-65 / CBS 138</strain>
    </source>
</reference>
<proteinExistence type="inferred from homology"/>
<feature type="chain" id="PRO_0000085692" description="Serine/threonine-protein kinase CBK1">
    <location>
        <begin position="1"/>
        <end position="773"/>
    </location>
</feature>
<feature type="domain" description="Protein kinase" evidence="2">
    <location>
        <begin position="370"/>
        <end position="686"/>
    </location>
</feature>
<feature type="domain" description="AGC-kinase C-terminal" evidence="3">
    <location>
        <begin position="687"/>
        <end position="771"/>
    </location>
</feature>
<feature type="region of interest" description="Disordered" evidence="5">
    <location>
        <begin position="50"/>
        <end position="111"/>
    </location>
</feature>
<feature type="region of interest" description="Disordered" evidence="5">
    <location>
        <begin position="177"/>
        <end position="275"/>
    </location>
</feature>
<feature type="compositionally biased region" description="Polar residues" evidence="5">
    <location>
        <begin position="50"/>
        <end position="59"/>
    </location>
</feature>
<feature type="compositionally biased region" description="Polar residues" evidence="5">
    <location>
        <begin position="178"/>
        <end position="217"/>
    </location>
</feature>
<feature type="compositionally biased region" description="Low complexity" evidence="5">
    <location>
        <begin position="218"/>
        <end position="256"/>
    </location>
</feature>
<feature type="compositionally biased region" description="Low complexity" evidence="5">
    <location>
        <begin position="265"/>
        <end position="275"/>
    </location>
</feature>
<feature type="active site" description="Proton acceptor" evidence="2 4">
    <location>
        <position position="493"/>
    </location>
</feature>
<feature type="binding site" evidence="2">
    <location>
        <begin position="376"/>
        <end position="384"/>
    </location>
    <ligand>
        <name>ATP</name>
        <dbReference type="ChEBI" id="CHEBI:30616"/>
    </ligand>
</feature>
<feature type="binding site" evidence="2">
    <location>
        <position position="399"/>
    </location>
    <ligand>
        <name>ATP</name>
        <dbReference type="ChEBI" id="CHEBI:30616"/>
    </ligand>
</feature>
<protein>
    <recommendedName>
        <fullName>Serine/threonine-protein kinase CBK1</fullName>
        <ecNumber>2.7.11.1</ecNumber>
    </recommendedName>
</protein>